<gene>
    <name evidence="1" type="primary">yihI</name>
    <name type="ordered locus">VV1_0896</name>
</gene>
<feature type="chain" id="PRO_0000209597" description="Der GTPase-activating protein YihI">
    <location>
        <begin position="1"/>
        <end position="181"/>
    </location>
</feature>
<feature type="region of interest" description="Disordered" evidence="2">
    <location>
        <begin position="1"/>
        <end position="75"/>
    </location>
</feature>
<feature type="region of interest" description="Disordered" evidence="2">
    <location>
        <begin position="145"/>
        <end position="181"/>
    </location>
</feature>
<feature type="compositionally biased region" description="Basic residues" evidence="2">
    <location>
        <begin position="32"/>
        <end position="43"/>
    </location>
</feature>
<feature type="compositionally biased region" description="Acidic residues" evidence="2">
    <location>
        <begin position="146"/>
        <end position="155"/>
    </location>
</feature>
<feature type="compositionally biased region" description="Basic and acidic residues" evidence="2">
    <location>
        <begin position="156"/>
        <end position="165"/>
    </location>
</feature>
<feature type="compositionally biased region" description="Acidic residues" evidence="2">
    <location>
        <begin position="166"/>
        <end position="181"/>
    </location>
</feature>
<name>YIHI_VIBVU</name>
<protein>
    <recommendedName>
        <fullName evidence="1">Der GTPase-activating protein YihI</fullName>
    </recommendedName>
</protein>
<comment type="function">
    <text evidence="1">A GTPase-activating protein (GAP) that modifies Der/EngA GTPase function. May play a role in ribosome biogenesis.</text>
</comment>
<comment type="subunit">
    <text evidence="1">Interacts with Der.</text>
</comment>
<comment type="similarity">
    <text evidence="1">Belongs to the YihI family.</text>
</comment>
<keyword id="KW-0343">GTPase activation</keyword>
<keyword id="KW-0690">Ribosome biogenesis</keyword>
<proteinExistence type="inferred from homology"/>
<evidence type="ECO:0000255" key="1">
    <source>
        <dbReference type="HAMAP-Rule" id="MF_01058"/>
    </source>
</evidence>
<evidence type="ECO:0000256" key="2">
    <source>
        <dbReference type="SAM" id="MobiDB-lite"/>
    </source>
</evidence>
<organism>
    <name type="scientific">Vibrio vulnificus (strain CMCP6)</name>
    <dbReference type="NCBI Taxonomy" id="216895"/>
    <lineage>
        <taxon>Bacteria</taxon>
        <taxon>Pseudomonadati</taxon>
        <taxon>Pseudomonadota</taxon>
        <taxon>Gammaproteobacteria</taxon>
        <taxon>Vibrionales</taxon>
        <taxon>Vibrionaceae</taxon>
        <taxon>Vibrio</taxon>
    </lineage>
</organism>
<sequence>MSRKKKSRKPGAAGAPEFMVTRNRSESDVAGRLRKKDKKRKGLKAGGRNSEEGAQQKHGSSQVRDPRLGSKKKIPLIVEPAKKLTKQERRLSAEQELEMLENDAKLNVLLDRIESGENLGRGLQQYVDEKLDRIEQLMSQLGLLEPEAEEEFEEEAPVRKSRSDDDLLADFEDFDMDDYKG</sequence>
<reference key="1">
    <citation type="submission" date="2002-12" db="EMBL/GenBank/DDBJ databases">
        <title>Complete genome sequence of Vibrio vulnificus CMCP6.</title>
        <authorList>
            <person name="Rhee J.H."/>
            <person name="Kim S.Y."/>
            <person name="Chung S.S."/>
            <person name="Kim J.J."/>
            <person name="Moon Y.H."/>
            <person name="Jeong H."/>
            <person name="Choy H.E."/>
        </authorList>
    </citation>
    <scope>NUCLEOTIDE SEQUENCE [LARGE SCALE GENOMIC DNA]</scope>
    <source>
        <strain>CMCP6</strain>
    </source>
</reference>
<dbReference type="EMBL" id="AE016795">
    <property type="protein sequence ID" value="AAO09399.1"/>
    <property type="molecule type" value="Genomic_DNA"/>
</dbReference>
<dbReference type="RefSeq" id="WP_011078963.1">
    <property type="nucleotide sequence ID" value="NC_004459.3"/>
</dbReference>
<dbReference type="SMR" id="Q8DDR1"/>
<dbReference type="GeneID" id="93895194"/>
<dbReference type="KEGG" id="vvu:VV1_0896"/>
<dbReference type="HOGENOM" id="CLU_094104_1_0_6"/>
<dbReference type="Proteomes" id="UP000002275">
    <property type="component" value="Chromosome 1"/>
</dbReference>
<dbReference type="GO" id="GO:0005096">
    <property type="term" value="F:GTPase activator activity"/>
    <property type="evidence" value="ECO:0007669"/>
    <property type="project" value="UniProtKB-KW"/>
</dbReference>
<dbReference type="GO" id="GO:0042254">
    <property type="term" value="P:ribosome biogenesis"/>
    <property type="evidence" value="ECO:0007669"/>
    <property type="project" value="UniProtKB-KW"/>
</dbReference>
<dbReference type="HAMAP" id="MF_01058">
    <property type="entry name" value="GAP_YihI"/>
    <property type="match status" value="1"/>
</dbReference>
<dbReference type="InterPro" id="IPR007336">
    <property type="entry name" value="YihI"/>
</dbReference>
<dbReference type="NCBIfam" id="NF003560">
    <property type="entry name" value="PRK05244.1-1"/>
    <property type="match status" value="1"/>
</dbReference>
<dbReference type="Pfam" id="PF04220">
    <property type="entry name" value="YihI"/>
    <property type="match status" value="1"/>
</dbReference>
<accession>Q8DDR1</accession>